<proteinExistence type="inferred from homology"/>
<evidence type="ECO:0000250" key="1">
    <source>
        <dbReference type="UniProtKB" id="P00846"/>
    </source>
</evidence>
<evidence type="ECO:0000255" key="2"/>
<evidence type="ECO:0000305" key="3"/>
<geneLocation type="mitochondrion"/>
<protein>
    <recommendedName>
        <fullName evidence="1">ATP synthase F(0) complex subunit a</fullName>
    </recommendedName>
    <alternativeName>
        <fullName>F-ATPase protein 6</fullName>
    </alternativeName>
    <alternativeName>
        <fullName evidence="1">Proton-conducting channel, ATP synthase F(0) complex subunit a</fullName>
    </alternativeName>
</protein>
<feature type="chain" id="PRO_0000082133" description="ATP synthase F(0) complex subunit a">
    <location>
        <begin position="1"/>
        <end position="222"/>
    </location>
</feature>
<feature type="transmembrane region" description="Helical" evidence="2">
    <location>
        <begin position="8"/>
        <end position="28"/>
    </location>
</feature>
<feature type="transmembrane region" description="Helical" evidence="2">
    <location>
        <begin position="64"/>
        <end position="84"/>
    </location>
</feature>
<feature type="transmembrane region" description="Helical" evidence="2">
    <location>
        <begin position="93"/>
        <end position="113"/>
    </location>
</feature>
<feature type="transmembrane region" description="Helical" evidence="2">
    <location>
        <begin position="127"/>
        <end position="147"/>
    </location>
</feature>
<feature type="transmembrane region" description="Helical" evidence="2">
    <location>
        <begin position="160"/>
        <end position="180"/>
    </location>
</feature>
<feature type="transmembrane region" description="Helical" evidence="2">
    <location>
        <begin position="197"/>
        <end position="219"/>
    </location>
</feature>
<feature type="sequence conflict" description="In Ref. 2; ABC17909." evidence="3" ref="2">
    <original>P</original>
    <variation>L</variation>
    <location>
        <position position="111"/>
    </location>
</feature>
<feature type="sequence conflict" description="In Ref. 2; ABC17909." evidence="3" ref="2">
    <original>S</original>
    <variation>L</variation>
    <location>
        <position position="165"/>
    </location>
</feature>
<keyword id="KW-0066">ATP synthesis</keyword>
<keyword id="KW-0138">CF(0)</keyword>
<keyword id="KW-0375">Hydrogen ion transport</keyword>
<keyword id="KW-0406">Ion transport</keyword>
<keyword id="KW-0472">Membrane</keyword>
<keyword id="KW-0496">Mitochondrion</keyword>
<keyword id="KW-0999">Mitochondrion inner membrane</keyword>
<keyword id="KW-1185">Reference proteome</keyword>
<keyword id="KW-0812">Transmembrane</keyword>
<keyword id="KW-1133">Transmembrane helix</keyword>
<keyword id="KW-0813">Transport</keyword>
<gene>
    <name evidence="1" type="primary">MT-ATP6</name>
    <name type="synonym">ATP6</name>
    <name type="synonym">ATPASE6</name>
    <name type="synonym">MTATP6</name>
</gene>
<accession>Q9TA24</accession>
<accession>Q2I3F6</accession>
<dbReference type="EMBL" id="AJ224821">
    <property type="protein sequence ID" value="CAA12143.1"/>
    <property type="status" value="ALT_INIT"/>
    <property type="molecule type" value="Genomic_DNA"/>
</dbReference>
<dbReference type="EMBL" id="DQ316069">
    <property type="protein sequence ID" value="ABC17909.1"/>
    <property type="molecule type" value="Genomic_DNA"/>
</dbReference>
<dbReference type="PIR" id="T45555">
    <property type="entry name" value="T45555"/>
</dbReference>
<dbReference type="RefSeq" id="NP_009284.2">
    <property type="nucleotide sequence ID" value="NC_000934.1"/>
</dbReference>
<dbReference type="SMR" id="Q9TA24"/>
<dbReference type="FunCoup" id="Q9TA24">
    <property type="interactions" value="37"/>
</dbReference>
<dbReference type="STRING" id="9785.ENSLAFP00000029496"/>
<dbReference type="GeneID" id="808788"/>
<dbReference type="KEGG" id="lav:808788"/>
<dbReference type="CTD" id="4508"/>
<dbReference type="eggNOG" id="KOG4665">
    <property type="taxonomic scope" value="Eukaryota"/>
</dbReference>
<dbReference type="InParanoid" id="Q9TA24"/>
<dbReference type="OrthoDB" id="5976622at2759"/>
<dbReference type="Proteomes" id="UP000007646">
    <property type="component" value="Unassembled WGS sequence"/>
</dbReference>
<dbReference type="GO" id="GO:0005743">
    <property type="term" value="C:mitochondrial inner membrane"/>
    <property type="evidence" value="ECO:0007669"/>
    <property type="project" value="UniProtKB-SubCell"/>
</dbReference>
<dbReference type="GO" id="GO:0045259">
    <property type="term" value="C:proton-transporting ATP synthase complex"/>
    <property type="evidence" value="ECO:0000250"/>
    <property type="project" value="UniProtKB"/>
</dbReference>
<dbReference type="GO" id="GO:0015252">
    <property type="term" value="F:proton channel activity"/>
    <property type="evidence" value="ECO:0000250"/>
    <property type="project" value="UniProtKB"/>
</dbReference>
<dbReference type="GO" id="GO:0046933">
    <property type="term" value="F:proton-transporting ATP synthase activity, rotational mechanism"/>
    <property type="evidence" value="ECO:0007669"/>
    <property type="project" value="Ensembl"/>
</dbReference>
<dbReference type="GO" id="GO:0015986">
    <property type="term" value="P:proton motive force-driven ATP synthesis"/>
    <property type="evidence" value="ECO:0000250"/>
    <property type="project" value="UniProtKB"/>
</dbReference>
<dbReference type="GO" id="GO:0042776">
    <property type="term" value="P:proton motive force-driven mitochondrial ATP synthesis"/>
    <property type="evidence" value="ECO:0007669"/>
    <property type="project" value="Ensembl"/>
</dbReference>
<dbReference type="GO" id="GO:1902600">
    <property type="term" value="P:proton transmembrane transport"/>
    <property type="evidence" value="ECO:0000250"/>
    <property type="project" value="UniProtKB"/>
</dbReference>
<dbReference type="CDD" id="cd00310">
    <property type="entry name" value="ATP-synt_Fo_a_6"/>
    <property type="match status" value="1"/>
</dbReference>
<dbReference type="FunFam" id="1.20.120.220:FF:000004">
    <property type="entry name" value="ATP synthase subunit a"/>
    <property type="match status" value="1"/>
</dbReference>
<dbReference type="Gene3D" id="1.20.120.220">
    <property type="entry name" value="ATP synthase, F0 complex, subunit A"/>
    <property type="match status" value="1"/>
</dbReference>
<dbReference type="InterPro" id="IPR000568">
    <property type="entry name" value="ATP_synth_F0_asu"/>
</dbReference>
<dbReference type="InterPro" id="IPR023011">
    <property type="entry name" value="ATP_synth_F0_asu_AS"/>
</dbReference>
<dbReference type="InterPro" id="IPR045083">
    <property type="entry name" value="ATP_synth_F0_asu_bact/mt"/>
</dbReference>
<dbReference type="InterPro" id="IPR035908">
    <property type="entry name" value="F0_ATP_A_sf"/>
</dbReference>
<dbReference type="NCBIfam" id="TIGR01131">
    <property type="entry name" value="ATP_synt_6_or_A"/>
    <property type="match status" value="1"/>
</dbReference>
<dbReference type="PANTHER" id="PTHR11410">
    <property type="entry name" value="ATP SYNTHASE SUBUNIT A"/>
    <property type="match status" value="1"/>
</dbReference>
<dbReference type="PANTHER" id="PTHR11410:SF0">
    <property type="entry name" value="ATP SYNTHASE SUBUNIT A"/>
    <property type="match status" value="1"/>
</dbReference>
<dbReference type="Pfam" id="PF00119">
    <property type="entry name" value="ATP-synt_A"/>
    <property type="match status" value="1"/>
</dbReference>
<dbReference type="PRINTS" id="PR00123">
    <property type="entry name" value="ATPASEA"/>
</dbReference>
<dbReference type="SUPFAM" id="SSF81336">
    <property type="entry name" value="F1F0 ATP synthase subunit A"/>
    <property type="match status" value="1"/>
</dbReference>
<dbReference type="PROSITE" id="PS00449">
    <property type="entry name" value="ATPASE_A"/>
    <property type="match status" value="1"/>
</dbReference>
<name>ATP6_LOXAF</name>
<reference key="1">
    <citation type="journal article" date="2000" name="Zoology">
        <title>The complete mitochondrial genome sequence of the African elephant (Loxodonta africana), phylogenetic relationships of Proboscidea to other mammals and D-loop heteroplasmy.</title>
        <authorList>
            <person name="Hauf J."/>
            <person name="Waddell P.J."/>
            <person name="Chalwatzis N."/>
            <person name="Joger U."/>
            <person name="Zimmermann F.K."/>
        </authorList>
    </citation>
    <scope>NUCLEOTIDE SEQUENCE [GENOMIC DNA]</scope>
    <source>
        <tissue>Blood</tissue>
    </source>
</reference>
<reference key="2">
    <citation type="journal article" date="2006" name="PLoS Biol.">
        <title>Complete mitochondrial genome and phylogeny of Pleistocene mammoth Mammuthus primigenius.</title>
        <authorList>
            <person name="Rogaev E.I."/>
            <person name="Moliaka Y.K."/>
            <person name="Malyarchuk B.A."/>
            <person name="Kondrashov F.A."/>
            <person name="Derenko M.V."/>
            <person name="Chumakov I."/>
            <person name="Grigorenko A.P."/>
        </authorList>
    </citation>
    <scope>NUCLEOTIDE SEQUENCE [GENOMIC DNA]</scope>
    <source>
        <tissue>Blood</tissue>
    </source>
</reference>
<comment type="function">
    <text evidence="1">Subunit a, of the mitochondrial membrane ATP synthase complex (F(1)F(0) ATP synthase or Complex V) that produces ATP from ADP in the presence of a proton gradient across the membrane which is generated by electron transport complexes of the respiratory chain. ATP synthase complex consist of a soluble F(1) head domain - the catalytic core - and a membrane F(1) domain - the membrane proton channel. These two domains are linked by a central stalk rotating inside the F(1) region and a stationary peripheral stalk. During catalysis, ATP synthesis in the catalytic domain of F(1) is coupled via a rotary mechanism of the central stalk subunits to proton translocation. With the subunit c (ATP5MC1), forms the proton-conducting channel in the F(0) domain, that contains two crucial half-channels (inlet and outlet) that facilitate proton movement from the mitochondrial intermembrane space (IMS) into the matrix. Protons are taken up via the inlet half-channel and released through the outlet half-channel, following a Grotthuss mechanism.</text>
</comment>
<comment type="catalytic activity">
    <reaction evidence="1">
        <text>H(+)(in) = H(+)(out)</text>
        <dbReference type="Rhea" id="RHEA:34979"/>
        <dbReference type="ChEBI" id="CHEBI:15378"/>
    </reaction>
</comment>
<comment type="subunit">
    <text evidence="1">Component of the ATP synthase complex composed at least of ATP5F1A/subunit alpha, ATP5F1B/subunit beta, ATP5MC1/subunit c (homooctomer), MT-ATP6/subunit a, MT-ATP8/subunit 8, ATP5ME/subunit e, ATP5MF/subunit f, ATP5MG/subunit g, ATP5MK/subunit k, ATP5MJ/subunit j, ATP5F1C/subunit gamma, ATP5F1D/subunit delta, ATP5F1E/subunit epsilon, ATP5PF/subunit F6, ATP5PB/subunit b, ATP5PD/subunit d, ATP5PO/subunit OSCP. ATP synthase complex consists of a soluble F(1) head domain (subunits alpha(3) and beta(3)) - the catalytic core - and a membrane F(0) domain - the membrane proton channel (subunits c, a, 8, e, f, g, k and j). These two domains are linked by a central stalk (subunits gamma, delta, and epsilon) rotating inside the F1 region and a stationary peripheral stalk (subunits F6, b, d, and OSCP). Interacts with DNAJC30; interaction is direct.</text>
</comment>
<comment type="subcellular location">
    <subcellularLocation>
        <location>Mitochondrion inner membrane</location>
        <topology>Multi-pass membrane protein</topology>
    </subcellularLocation>
</comment>
<comment type="similarity">
    <text evidence="3">Belongs to the ATPase A chain family.</text>
</comment>
<comment type="sequence caution" evidence="3">
    <conflict type="erroneous initiation">
        <sequence resource="EMBL-CDS" id="CAA12143"/>
    </conflict>
</comment>
<organism>
    <name type="scientific">Loxodonta africana</name>
    <name type="common">African elephant</name>
    <dbReference type="NCBI Taxonomy" id="9785"/>
    <lineage>
        <taxon>Eukaryota</taxon>
        <taxon>Metazoa</taxon>
        <taxon>Chordata</taxon>
        <taxon>Craniata</taxon>
        <taxon>Vertebrata</taxon>
        <taxon>Euteleostomi</taxon>
        <taxon>Mammalia</taxon>
        <taxon>Eutheria</taxon>
        <taxon>Afrotheria</taxon>
        <taxon>Proboscidea</taxon>
        <taxon>Elephantidae</taxon>
        <taxon>Loxodonta</taxon>
    </lineage>
</organism>
<sequence>MNEELSTFFYVPVGTMMLAIAFPAILLPTPNRLITNRWITIQQWLIQLIMKQLLSIHNTKGLSWSLMLITLTLFIGLTNLLGLLPYSFAPTTQLTVNLSMAIPLWTGTVVPGFRYKTKISLAHLLPQGTPMFLIPMIIIIETISLLIRPVTLAVRLTANITAGHSLIHLTGTATLTLSSIHSMTITVTFVTVILLTILELAVALIQAYVFALLISLYLHENA</sequence>